<accession>A3M7G4</accession>
<gene>
    <name evidence="1" type="primary">hflD</name>
    <name type="ordered locus">A1S_2440</name>
</gene>
<sequence>MVELPFQQSQALNVRQNRALALAGVFQATQLTHMTAMTGQQSIGESGNFYFELLIKASLNIRPTTNNNTVQTLDFFNQLADISLGLKTLENCITQPFSNAPKSRLPKMRSAKLPMSYAMSLLQLEKKVYSNPEYVAIIEKAQQKILKQLSFFDNNYLHPSILANLAQTYVDTAGQINPRILVRGNAEAFKDTNHTNRIRACLFTGLQMAHLWRQLGGSSWNMIFSKRKLLQDIQALARLQYQVI</sequence>
<evidence type="ECO:0000255" key="1">
    <source>
        <dbReference type="HAMAP-Rule" id="MF_00695"/>
    </source>
</evidence>
<reference key="1">
    <citation type="journal article" date="2007" name="Genes Dev.">
        <title>New insights into Acinetobacter baumannii pathogenesis revealed by high-density pyrosequencing and transposon mutagenesis.</title>
        <authorList>
            <person name="Smith M.G."/>
            <person name="Gianoulis T.A."/>
            <person name="Pukatzki S."/>
            <person name="Mekalanos J.J."/>
            <person name="Ornston L.N."/>
            <person name="Gerstein M."/>
            <person name="Snyder M."/>
        </authorList>
    </citation>
    <scope>NUCLEOTIDE SEQUENCE [LARGE SCALE GENOMIC DNA]</scope>
    <source>
        <strain>ATCC 17978 / DSM 105126 / CIP 53.77 / LMG 1025 / NCDC KC755 / 5377</strain>
    </source>
</reference>
<dbReference type="EMBL" id="CP000521">
    <property type="protein sequence ID" value="ABO12858.1"/>
    <property type="molecule type" value="Genomic_DNA"/>
</dbReference>
<dbReference type="RefSeq" id="WP_000229972.1">
    <property type="nucleotide sequence ID" value="NZ_CP053098.1"/>
</dbReference>
<dbReference type="SMR" id="A3M7G4"/>
<dbReference type="KEGG" id="acb:A1S_2440"/>
<dbReference type="HOGENOM" id="CLU_098920_0_0_6"/>
<dbReference type="GO" id="GO:0005737">
    <property type="term" value="C:cytoplasm"/>
    <property type="evidence" value="ECO:0007669"/>
    <property type="project" value="UniProtKB-SubCell"/>
</dbReference>
<dbReference type="GO" id="GO:0005886">
    <property type="term" value="C:plasma membrane"/>
    <property type="evidence" value="ECO:0007669"/>
    <property type="project" value="UniProtKB-SubCell"/>
</dbReference>
<dbReference type="Gene3D" id="1.10.3890.10">
    <property type="entry name" value="HflD-like"/>
    <property type="match status" value="1"/>
</dbReference>
<dbReference type="HAMAP" id="MF_00695">
    <property type="entry name" value="HflD_protein"/>
    <property type="match status" value="1"/>
</dbReference>
<dbReference type="InterPro" id="IPR007451">
    <property type="entry name" value="HflD"/>
</dbReference>
<dbReference type="InterPro" id="IPR035932">
    <property type="entry name" value="HflD-like_sf"/>
</dbReference>
<dbReference type="NCBIfam" id="NF001250">
    <property type="entry name" value="PRK00218.1-6"/>
    <property type="match status" value="1"/>
</dbReference>
<dbReference type="PANTHER" id="PTHR38100">
    <property type="entry name" value="HIGH FREQUENCY LYSOGENIZATION PROTEIN HFLD"/>
    <property type="match status" value="1"/>
</dbReference>
<dbReference type="PANTHER" id="PTHR38100:SF1">
    <property type="entry name" value="HIGH FREQUENCY LYSOGENIZATION PROTEIN HFLD"/>
    <property type="match status" value="1"/>
</dbReference>
<dbReference type="Pfam" id="PF04356">
    <property type="entry name" value="DUF489"/>
    <property type="match status" value="1"/>
</dbReference>
<dbReference type="SUPFAM" id="SSF101322">
    <property type="entry name" value="YcfC-like"/>
    <property type="match status" value="1"/>
</dbReference>
<name>HFLD_ACIBT</name>
<proteinExistence type="inferred from homology"/>
<protein>
    <recommendedName>
        <fullName evidence="1">High frequency lysogenization protein HflD homolog</fullName>
    </recommendedName>
</protein>
<organism>
    <name type="scientific">Acinetobacter baumannii (strain ATCC 17978 / DSM 105126 / CIP 53.77 / LMG 1025 / NCDC KC755 / 5377)</name>
    <dbReference type="NCBI Taxonomy" id="400667"/>
    <lineage>
        <taxon>Bacteria</taxon>
        <taxon>Pseudomonadati</taxon>
        <taxon>Pseudomonadota</taxon>
        <taxon>Gammaproteobacteria</taxon>
        <taxon>Moraxellales</taxon>
        <taxon>Moraxellaceae</taxon>
        <taxon>Acinetobacter</taxon>
        <taxon>Acinetobacter calcoaceticus/baumannii complex</taxon>
    </lineage>
</organism>
<keyword id="KW-0997">Cell inner membrane</keyword>
<keyword id="KW-1003">Cell membrane</keyword>
<keyword id="KW-0963">Cytoplasm</keyword>
<keyword id="KW-0472">Membrane</keyword>
<comment type="subcellular location">
    <subcellularLocation>
        <location>Cytoplasm</location>
    </subcellularLocation>
    <subcellularLocation>
        <location evidence="1">Cell inner membrane</location>
        <topology evidence="1">Peripheral membrane protein</topology>
        <orientation evidence="1">Cytoplasmic side</orientation>
    </subcellularLocation>
</comment>
<comment type="similarity">
    <text evidence="1">Belongs to the HflD family.</text>
</comment>
<feature type="chain" id="PRO_0000390633" description="High frequency lysogenization protein HflD homolog">
    <location>
        <begin position="1"/>
        <end position="244"/>
    </location>
</feature>